<sequence length="148" mass="16707">MTNDNPRTVIAQGTFDLLHPGHVHYLEEAAAMGDELYVIVARKSNVDHKKAPICSAAQRRDVVDALEVVDEAILGHEEDIFVPIERIDPDVIALGHDQHHDADAIEDELERRGIDCVVDRASGRESTREDEVLSTRLIIDRILERRDR</sequence>
<feature type="chain" id="PRO_0000406276" description="FAD synthase">
    <location>
        <begin position="1"/>
        <end position="148"/>
    </location>
</feature>
<feature type="binding site" evidence="1">
    <location>
        <begin position="14"/>
        <end position="15"/>
    </location>
    <ligand>
        <name>ATP</name>
        <dbReference type="ChEBI" id="CHEBI:30616"/>
    </ligand>
</feature>
<feature type="binding site" evidence="1">
    <location>
        <begin position="19"/>
        <end position="22"/>
    </location>
    <ligand>
        <name>ATP</name>
        <dbReference type="ChEBI" id="CHEBI:30616"/>
    </ligand>
</feature>
<feature type="binding site" evidence="1">
    <location>
        <position position="97"/>
    </location>
    <ligand>
        <name>ATP</name>
        <dbReference type="ChEBI" id="CHEBI:30616"/>
    </ligand>
</feature>
<proteinExistence type="inferred from homology"/>
<reference key="1">
    <citation type="journal article" date="2012" name="BMC Genomics">
        <title>A comparative genomics perspective on the genetic content of the alkaliphilic haloarchaeon Natrialba magadii ATCC 43099T.</title>
        <authorList>
            <person name="Siddaramappa S."/>
            <person name="Challacombe J.F."/>
            <person name="Decastro R.E."/>
            <person name="Pfeiffer F."/>
            <person name="Sastre D.E."/>
            <person name="Gimenez M.I."/>
            <person name="Paggi R.A."/>
            <person name="Detter J.C."/>
            <person name="Davenport K.W."/>
            <person name="Goodwin L.A."/>
            <person name="Kyrpides N."/>
            <person name="Tapia R."/>
            <person name="Pitluck S."/>
            <person name="Lucas S."/>
            <person name="Woyke T."/>
            <person name="Maupin-Furlow J.A."/>
        </authorList>
    </citation>
    <scope>NUCLEOTIDE SEQUENCE [LARGE SCALE GENOMIC DNA]</scope>
    <source>
        <strain>ATCC 43099 / DSM 3394 / CCM 3739 / CIP 104546 / IAM 13178 / JCM 8861 / NBRC 102185 / NCIMB 2190 / MS3</strain>
    </source>
</reference>
<keyword id="KW-0067">ATP-binding</keyword>
<keyword id="KW-0274">FAD</keyword>
<keyword id="KW-0285">Flavoprotein</keyword>
<keyword id="KW-0288">FMN</keyword>
<keyword id="KW-0547">Nucleotide-binding</keyword>
<keyword id="KW-0548">Nucleotidyltransferase</keyword>
<keyword id="KW-1185">Reference proteome</keyword>
<keyword id="KW-0808">Transferase</keyword>
<name>RIBL_NATMM</name>
<evidence type="ECO:0000255" key="1">
    <source>
        <dbReference type="HAMAP-Rule" id="MF_02115"/>
    </source>
</evidence>
<protein>
    <recommendedName>
        <fullName evidence="1">FAD synthase</fullName>
        <ecNumber evidence="1">2.7.7.2</ecNumber>
    </recommendedName>
    <alternativeName>
        <fullName evidence="1">FMN adenylyltransferase</fullName>
    </alternativeName>
    <alternativeName>
        <fullName evidence="1">Flavin adenine dinucleotide synthase</fullName>
    </alternativeName>
</protein>
<gene>
    <name evidence="1" type="primary">ribL</name>
    <name type="ordered locus">Nmag_0621</name>
</gene>
<dbReference type="EC" id="2.7.7.2" evidence="1"/>
<dbReference type="EMBL" id="CP001932">
    <property type="protein sequence ID" value="ADD04207.1"/>
    <property type="molecule type" value="Genomic_DNA"/>
</dbReference>
<dbReference type="RefSeq" id="WP_004216359.1">
    <property type="nucleotide sequence ID" value="NC_013922.1"/>
</dbReference>
<dbReference type="SMR" id="D3SYU6"/>
<dbReference type="STRING" id="547559.Nmag_0621"/>
<dbReference type="PaxDb" id="547559-Nmag_0621"/>
<dbReference type="GeneID" id="8823448"/>
<dbReference type="KEGG" id="nmg:Nmag_0621"/>
<dbReference type="eggNOG" id="arCOG01222">
    <property type="taxonomic scope" value="Archaea"/>
</dbReference>
<dbReference type="HOGENOM" id="CLU_034585_2_1_2"/>
<dbReference type="OrthoDB" id="1912at2157"/>
<dbReference type="UniPathway" id="UPA00277">
    <property type="reaction ID" value="UER00407"/>
</dbReference>
<dbReference type="Proteomes" id="UP000001879">
    <property type="component" value="Chromosome"/>
</dbReference>
<dbReference type="GO" id="GO:0005524">
    <property type="term" value="F:ATP binding"/>
    <property type="evidence" value="ECO:0007669"/>
    <property type="project" value="UniProtKB-UniRule"/>
</dbReference>
<dbReference type="GO" id="GO:0003919">
    <property type="term" value="F:FMN adenylyltransferase activity"/>
    <property type="evidence" value="ECO:0007669"/>
    <property type="project" value="UniProtKB-UniRule"/>
</dbReference>
<dbReference type="GO" id="GO:0006747">
    <property type="term" value="P:FAD biosynthetic process"/>
    <property type="evidence" value="ECO:0007669"/>
    <property type="project" value="UniProtKB-UniRule"/>
</dbReference>
<dbReference type="GO" id="GO:0046444">
    <property type="term" value="P:FMN metabolic process"/>
    <property type="evidence" value="ECO:0007669"/>
    <property type="project" value="UniProtKB-UniRule"/>
</dbReference>
<dbReference type="Gene3D" id="3.40.50.620">
    <property type="entry name" value="HUPs"/>
    <property type="match status" value="1"/>
</dbReference>
<dbReference type="HAMAP" id="MF_02115">
    <property type="entry name" value="FAD_synth_arch"/>
    <property type="match status" value="1"/>
</dbReference>
<dbReference type="InterPro" id="IPR050385">
    <property type="entry name" value="Archaeal_FAD_synthase"/>
</dbReference>
<dbReference type="InterPro" id="IPR004821">
    <property type="entry name" value="Cyt_trans-like"/>
</dbReference>
<dbReference type="InterPro" id="IPR024902">
    <property type="entry name" value="FAD_synth_RibL"/>
</dbReference>
<dbReference type="InterPro" id="IPR014729">
    <property type="entry name" value="Rossmann-like_a/b/a_fold"/>
</dbReference>
<dbReference type="NCBIfam" id="TIGR00125">
    <property type="entry name" value="cyt_tran_rel"/>
    <property type="match status" value="1"/>
</dbReference>
<dbReference type="PANTHER" id="PTHR43793">
    <property type="entry name" value="FAD SYNTHASE"/>
    <property type="match status" value="1"/>
</dbReference>
<dbReference type="PANTHER" id="PTHR43793:SF1">
    <property type="entry name" value="FAD SYNTHASE"/>
    <property type="match status" value="1"/>
</dbReference>
<dbReference type="Pfam" id="PF01467">
    <property type="entry name" value="CTP_transf_like"/>
    <property type="match status" value="1"/>
</dbReference>
<dbReference type="SUPFAM" id="SSF52374">
    <property type="entry name" value="Nucleotidylyl transferase"/>
    <property type="match status" value="1"/>
</dbReference>
<accession>D3SYU6</accession>
<organism>
    <name type="scientific">Natrialba magadii (strain ATCC 43099 / DSM 3394 / CCM 3739 / CIP 104546 / IAM 13178 / JCM 8861 / NBRC 102185 / NCIMB 2190 / MS3)</name>
    <name type="common">Natronobacterium magadii</name>
    <dbReference type="NCBI Taxonomy" id="547559"/>
    <lineage>
        <taxon>Archaea</taxon>
        <taxon>Methanobacteriati</taxon>
        <taxon>Methanobacteriota</taxon>
        <taxon>Stenosarchaea group</taxon>
        <taxon>Halobacteria</taxon>
        <taxon>Halobacteriales</taxon>
        <taxon>Natrialbaceae</taxon>
        <taxon>Natrialba</taxon>
    </lineage>
</organism>
<comment type="function">
    <text evidence="1">Catalyzes the transfer of the AMP portion of ATP to flavin mononucleotide (FMN) to produce flavin adenine dinucleotide (FAD) coenzyme.</text>
</comment>
<comment type="catalytic activity">
    <reaction evidence="1">
        <text>FMN + ATP + H(+) = FAD + diphosphate</text>
        <dbReference type="Rhea" id="RHEA:17237"/>
        <dbReference type="ChEBI" id="CHEBI:15378"/>
        <dbReference type="ChEBI" id="CHEBI:30616"/>
        <dbReference type="ChEBI" id="CHEBI:33019"/>
        <dbReference type="ChEBI" id="CHEBI:57692"/>
        <dbReference type="ChEBI" id="CHEBI:58210"/>
        <dbReference type="EC" id="2.7.7.2"/>
    </reaction>
</comment>
<comment type="cofactor">
    <cofactor evidence="1">
        <name>a divalent metal cation</name>
        <dbReference type="ChEBI" id="CHEBI:60240"/>
    </cofactor>
</comment>
<comment type="pathway">
    <text evidence="1">Cofactor biosynthesis; FAD biosynthesis; FAD from FMN: step 1/1.</text>
</comment>
<comment type="subunit">
    <text evidence="1">Homodimer.</text>
</comment>
<comment type="similarity">
    <text evidence="1">Belongs to the archaeal FAD synthase family.</text>
</comment>